<name>FOLD_ENTFA</name>
<proteinExistence type="inferred from homology"/>
<protein>
    <recommendedName>
        <fullName evidence="1">Bifunctional protein FolD</fullName>
    </recommendedName>
    <domain>
        <recommendedName>
            <fullName evidence="1">Methylenetetrahydrofolate dehydrogenase</fullName>
            <ecNumber evidence="1">1.5.1.5</ecNumber>
        </recommendedName>
    </domain>
    <domain>
        <recommendedName>
            <fullName evidence="1">Methenyltetrahydrofolate cyclohydrolase</fullName>
            <ecNumber evidence="1">3.5.4.9</ecNumber>
        </recommendedName>
    </domain>
</protein>
<gene>
    <name evidence="1" type="primary">folD</name>
    <name type="ordered locus">EF_0978</name>
</gene>
<reference key="1">
    <citation type="journal article" date="2003" name="Science">
        <title>Role of mobile DNA in the evolution of vancomycin-resistant Enterococcus faecalis.</title>
        <authorList>
            <person name="Paulsen I.T."/>
            <person name="Banerjei L."/>
            <person name="Myers G.S.A."/>
            <person name="Nelson K.E."/>
            <person name="Seshadri R."/>
            <person name="Read T.D."/>
            <person name="Fouts D.E."/>
            <person name="Eisen J.A."/>
            <person name="Gill S.R."/>
            <person name="Heidelberg J.F."/>
            <person name="Tettelin H."/>
            <person name="Dodson R.J."/>
            <person name="Umayam L.A."/>
            <person name="Brinkac L.M."/>
            <person name="Beanan M.J."/>
            <person name="Daugherty S.C."/>
            <person name="DeBoy R.T."/>
            <person name="Durkin S.A."/>
            <person name="Kolonay J.F."/>
            <person name="Madupu R."/>
            <person name="Nelson W.C."/>
            <person name="Vamathevan J.J."/>
            <person name="Tran B."/>
            <person name="Upton J."/>
            <person name="Hansen T."/>
            <person name="Shetty J."/>
            <person name="Khouri H.M."/>
            <person name="Utterback T.R."/>
            <person name="Radune D."/>
            <person name="Ketchum K.A."/>
            <person name="Dougherty B.A."/>
            <person name="Fraser C.M."/>
        </authorList>
    </citation>
    <scope>NUCLEOTIDE SEQUENCE [LARGE SCALE GENOMIC DNA]</scope>
    <source>
        <strain>ATCC 700802 / V583</strain>
    </source>
</reference>
<keyword id="KW-0028">Amino-acid biosynthesis</keyword>
<keyword id="KW-0368">Histidine biosynthesis</keyword>
<keyword id="KW-0378">Hydrolase</keyword>
<keyword id="KW-0486">Methionine biosynthesis</keyword>
<keyword id="KW-0511">Multifunctional enzyme</keyword>
<keyword id="KW-0521">NADP</keyword>
<keyword id="KW-0554">One-carbon metabolism</keyword>
<keyword id="KW-0560">Oxidoreductase</keyword>
<keyword id="KW-0658">Purine biosynthesis</keyword>
<keyword id="KW-1185">Reference proteome</keyword>
<sequence length="281" mass="30955">MSTVINGRELADQMQAEIQKDVEKMTQQGIQPGLVVLLVGENPASQTYVRNKERAAAKIGILSKVEKLPETISEEELLAEIDKYNQDSRFHGILVQLPLPKHIDEEKILLAIDPKKDVDGFHPMNLGRLFVGKPEMIPCTPYGIMKMFEAYDIDLTGKRAVVIGRSNIVGKPMAQLLLMKNATVTIAHSKTEHLAEVAKEADILVVAIGRGHFVTKEFVKPGAVVIDVGMNRNQEGKLIGDVAFDEVSEIASYITPVPKGVGPMTITMLMYQTVEAAKKQK</sequence>
<organism>
    <name type="scientific">Enterococcus faecalis (strain ATCC 700802 / V583)</name>
    <dbReference type="NCBI Taxonomy" id="226185"/>
    <lineage>
        <taxon>Bacteria</taxon>
        <taxon>Bacillati</taxon>
        <taxon>Bacillota</taxon>
        <taxon>Bacilli</taxon>
        <taxon>Lactobacillales</taxon>
        <taxon>Enterococcaceae</taxon>
        <taxon>Enterococcus</taxon>
    </lineage>
</organism>
<feature type="chain" id="PRO_0000268344" description="Bifunctional protein FolD">
    <location>
        <begin position="1"/>
        <end position="281"/>
    </location>
</feature>
<feature type="binding site" evidence="1">
    <location>
        <begin position="164"/>
        <end position="166"/>
    </location>
    <ligand>
        <name>NADP(+)</name>
        <dbReference type="ChEBI" id="CHEBI:58349"/>
    </ligand>
</feature>
<feature type="binding site" evidence="1">
    <location>
        <position position="189"/>
    </location>
    <ligand>
        <name>NADP(+)</name>
        <dbReference type="ChEBI" id="CHEBI:58349"/>
    </ligand>
</feature>
<comment type="function">
    <text evidence="1">Catalyzes the oxidation of 5,10-methylenetetrahydrofolate to 5,10-methenyltetrahydrofolate and then the hydrolysis of 5,10-methenyltetrahydrofolate to 10-formyltetrahydrofolate.</text>
</comment>
<comment type="catalytic activity">
    <reaction evidence="1">
        <text>(6R)-5,10-methylene-5,6,7,8-tetrahydrofolate + NADP(+) = (6R)-5,10-methenyltetrahydrofolate + NADPH</text>
        <dbReference type="Rhea" id="RHEA:22812"/>
        <dbReference type="ChEBI" id="CHEBI:15636"/>
        <dbReference type="ChEBI" id="CHEBI:57455"/>
        <dbReference type="ChEBI" id="CHEBI:57783"/>
        <dbReference type="ChEBI" id="CHEBI:58349"/>
        <dbReference type="EC" id="1.5.1.5"/>
    </reaction>
</comment>
<comment type="catalytic activity">
    <reaction evidence="1">
        <text>(6R)-5,10-methenyltetrahydrofolate + H2O = (6R)-10-formyltetrahydrofolate + H(+)</text>
        <dbReference type="Rhea" id="RHEA:23700"/>
        <dbReference type="ChEBI" id="CHEBI:15377"/>
        <dbReference type="ChEBI" id="CHEBI:15378"/>
        <dbReference type="ChEBI" id="CHEBI:57455"/>
        <dbReference type="ChEBI" id="CHEBI:195366"/>
        <dbReference type="EC" id="3.5.4.9"/>
    </reaction>
</comment>
<comment type="pathway">
    <text evidence="1">One-carbon metabolism; tetrahydrofolate interconversion.</text>
</comment>
<comment type="subunit">
    <text evidence="1">Homodimer.</text>
</comment>
<comment type="similarity">
    <text evidence="1">Belongs to the tetrahydrofolate dehydrogenase/cyclohydrolase family.</text>
</comment>
<dbReference type="EC" id="1.5.1.5" evidence="1"/>
<dbReference type="EC" id="3.5.4.9" evidence="1"/>
<dbReference type="EMBL" id="AE016830">
    <property type="protein sequence ID" value="AAO80784.1"/>
    <property type="molecule type" value="Genomic_DNA"/>
</dbReference>
<dbReference type="RefSeq" id="NP_814714.1">
    <property type="nucleotide sequence ID" value="NC_004668.1"/>
</dbReference>
<dbReference type="RefSeq" id="WP_002355876.1">
    <property type="nucleotide sequence ID" value="NZ_KE136527.1"/>
</dbReference>
<dbReference type="SMR" id="Q836W7"/>
<dbReference type="STRING" id="226185.EF_0978"/>
<dbReference type="EnsemblBacteria" id="AAO80784">
    <property type="protein sequence ID" value="AAO80784"/>
    <property type="gene ID" value="EF_0978"/>
</dbReference>
<dbReference type="KEGG" id="efa:EF0978"/>
<dbReference type="PATRIC" id="fig|226185.45.peg.3184"/>
<dbReference type="eggNOG" id="COG0190">
    <property type="taxonomic scope" value="Bacteria"/>
</dbReference>
<dbReference type="HOGENOM" id="CLU_034045_2_1_9"/>
<dbReference type="UniPathway" id="UPA00193"/>
<dbReference type="Proteomes" id="UP000001415">
    <property type="component" value="Chromosome"/>
</dbReference>
<dbReference type="GO" id="GO:0005829">
    <property type="term" value="C:cytosol"/>
    <property type="evidence" value="ECO:0007669"/>
    <property type="project" value="TreeGrafter"/>
</dbReference>
<dbReference type="GO" id="GO:0004477">
    <property type="term" value="F:methenyltetrahydrofolate cyclohydrolase activity"/>
    <property type="evidence" value="ECO:0007669"/>
    <property type="project" value="UniProtKB-UniRule"/>
</dbReference>
<dbReference type="GO" id="GO:0004488">
    <property type="term" value="F:methylenetetrahydrofolate dehydrogenase (NADP+) activity"/>
    <property type="evidence" value="ECO:0007669"/>
    <property type="project" value="UniProtKB-UniRule"/>
</dbReference>
<dbReference type="GO" id="GO:0000105">
    <property type="term" value="P:L-histidine biosynthetic process"/>
    <property type="evidence" value="ECO:0007669"/>
    <property type="project" value="UniProtKB-KW"/>
</dbReference>
<dbReference type="GO" id="GO:0009086">
    <property type="term" value="P:methionine biosynthetic process"/>
    <property type="evidence" value="ECO:0007669"/>
    <property type="project" value="UniProtKB-KW"/>
</dbReference>
<dbReference type="GO" id="GO:0006164">
    <property type="term" value="P:purine nucleotide biosynthetic process"/>
    <property type="evidence" value="ECO:0007669"/>
    <property type="project" value="UniProtKB-KW"/>
</dbReference>
<dbReference type="GO" id="GO:0035999">
    <property type="term" value="P:tetrahydrofolate interconversion"/>
    <property type="evidence" value="ECO:0007669"/>
    <property type="project" value="UniProtKB-UniRule"/>
</dbReference>
<dbReference type="CDD" id="cd01080">
    <property type="entry name" value="NAD_bind_m-THF_DH_Cyclohyd"/>
    <property type="match status" value="1"/>
</dbReference>
<dbReference type="FunFam" id="3.40.50.10860:FF:000001">
    <property type="entry name" value="Bifunctional protein FolD"/>
    <property type="match status" value="1"/>
</dbReference>
<dbReference type="FunFam" id="3.40.50.720:FF:000094">
    <property type="entry name" value="Bifunctional protein FolD"/>
    <property type="match status" value="1"/>
</dbReference>
<dbReference type="Gene3D" id="3.40.50.10860">
    <property type="entry name" value="Leucine Dehydrogenase, chain A, domain 1"/>
    <property type="match status" value="1"/>
</dbReference>
<dbReference type="Gene3D" id="3.40.50.720">
    <property type="entry name" value="NAD(P)-binding Rossmann-like Domain"/>
    <property type="match status" value="1"/>
</dbReference>
<dbReference type="HAMAP" id="MF_01576">
    <property type="entry name" value="THF_DHG_CYH"/>
    <property type="match status" value="1"/>
</dbReference>
<dbReference type="InterPro" id="IPR046346">
    <property type="entry name" value="Aminoacid_DH-like_N_sf"/>
</dbReference>
<dbReference type="InterPro" id="IPR036291">
    <property type="entry name" value="NAD(P)-bd_dom_sf"/>
</dbReference>
<dbReference type="InterPro" id="IPR000672">
    <property type="entry name" value="THF_DH/CycHdrlase"/>
</dbReference>
<dbReference type="InterPro" id="IPR020630">
    <property type="entry name" value="THF_DH/CycHdrlase_cat_dom"/>
</dbReference>
<dbReference type="InterPro" id="IPR020867">
    <property type="entry name" value="THF_DH/CycHdrlase_CS"/>
</dbReference>
<dbReference type="InterPro" id="IPR020631">
    <property type="entry name" value="THF_DH/CycHdrlase_NAD-bd_dom"/>
</dbReference>
<dbReference type="NCBIfam" id="NF008058">
    <property type="entry name" value="PRK10792.1"/>
    <property type="match status" value="1"/>
</dbReference>
<dbReference type="NCBIfam" id="NF010776">
    <property type="entry name" value="PRK14179.1"/>
    <property type="match status" value="1"/>
</dbReference>
<dbReference type="NCBIfam" id="NF010783">
    <property type="entry name" value="PRK14186.1"/>
    <property type="match status" value="1"/>
</dbReference>
<dbReference type="PANTHER" id="PTHR48099:SF5">
    <property type="entry name" value="C-1-TETRAHYDROFOLATE SYNTHASE, CYTOPLASMIC"/>
    <property type="match status" value="1"/>
</dbReference>
<dbReference type="PANTHER" id="PTHR48099">
    <property type="entry name" value="C-1-TETRAHYDROFOLATE SYNTHASE, CYTOPLASMIC-RELATED"/>
    <property type="match status" value="1"/>
</dbReference>
<dbReference type="Pfam" id="PF00763">
    <property type="entry name" value="THF_DHG_CYH"/>
    <property type="match status" value="1"/>
</dbReference>
<dbReference type="Pfam" id="PF02882">
    <property type="entry name" value="THF_DHG_CYH_C"/>
    <property type="match status" value="1"/>
</dbReference>
<dbReference type="PRINTS" id="PR00085">
    <property type="entry name" value="THFDHDRGNASE"/>
</dbReference>
<dbReference type="SUPFAM" id="SSF53223">
    <property type="entry name" value="Aminoacid dehydrogenase-like, N-terminal domain"/>
    <property type="match status" value="1"/>
</dbReference>
<dbReference type="SUPFAM" id="SSF51735">
    <property type="entry name" value="NAD(P)-binding Rossmann-fold domains"/>
    <property type="match status" value="1"/>
</dbReference>
<dbReference type="PROSITE" id="PS00766">
    <property type="entry name" value="THF_DHG_CYH_1"/>
    <property type="match status" value="1"/>
</dbReference>
<dbReference type="PROSITE" id="PS00767">
    <property type="entry name" value="THF_DHG_CYH_2"/>
    <property type="match status" value="1"/>
</dbReference>
<evidence type="ECO:0000255" key="1">
    <source>
        <dbReference type="HAMAP-Rule" id="MF_01576"/>
    </source>
</evidence>
<accession>Q836W7</accession>